<organism>
    <name type="scientific">Yarrowia lipolytica (strain CLIB 122 / E 150)</name>
    <name type="common">Yeast</name>
    <name type="synonym">Candida lipolytica</name>
    <dbReference type="NCBI Taxonomy" id="284591"/>
    <lineage>
        <taxon>Eukaryota</taxon>
        <taxon>Fungi</taxon>
        <taxon>Dikarya</taxon>
        <taxon>Ascomycota</taxon>
        <taxon>Saccharomycotina</taxon>
        <taxon>Dipodascomycetes</taxon>
        <taxon>Dipodascales</taxon>
        <taxon>Dipodascales incertae sedis</taxon>
        <taxon>Yarrowia</taxon>
    </lineage>
</organism>
<accession>Q99145</accession>
<accession>Q6CCZ8</accession>
<gene>
    <name type="primary">HIS1</name>
    <name type="ordered locus">YALI0C05170g</name>
</gene>
<dbReference type="EC" id="2.4.2.17"/>
<dbReference type="EMBL" id="U40563">
    <property type="protein sequence ID" value="AAA85391.1"/>
    <property type="molecule type" value="Genomic_DNA"/>
</dbReference>
<dbReference type="EMBL" id="CR382129">
    <property type="protein sequence ID" value="CAG81765.1"/>
    <property type="status" value="ALT_SEQ"/>
    <property type="molecule type" value="Genomic_DNA"/>
</dbReference>
<dbReference type="RefSeq" id="XP_501464.1">
    <property type="nucleotide sequence ID" value="XM_501464.1"/>
</dbReference>
<dbReference type="SMR" id="Q99145"/>
<dbReference type="FunCoup" id="Q99145">
    <property type="interactions" value="210"/>
</dbReference>
<dbReference type="STRING" id="284591.Q99145"/>
<dbReference type="KEGG" id="yli:2909557"/>
<dbReference type="InParanoid" id="Q99145"/>
<dbReference type="OrthoDB" id="72688at4891"/>
<dbReference type="UniPathway" id="UPA00031">
    <property type="reaction ID" value="UER00006"/>
</dbReference>
<dbReference type="Proteomes" id="UP000001300">
    <property type="component" value="Chromosome C"/>
</dbReference>
<dbReference type="GO" id="GO:0005737">
    <property type="term" value="C:cytoplasm"/>
    <property type="evidence" value="ECO:0007669"/>
    <property type="project" value="UniProtKB-SubCell"/>
</dbReference>
<dbReference type="GO" id="GO:0005524">
    <property type="term" value="F:ATP binding"/>
    <property type="evidence" value="ECO:0007669"/>
    <property type="project" value="UniProtKB-KW"/>
</dbReference>
<dbReference type="GO" id="GO:0003879">
    <property type="term" value="F:ATP phosphoribosyltransferase activity"/>
    <property type="evidence" value="ECO:0000318"/>
    <property type="project" value="GO_Central"/>
</dbReference>
<dbReference type="GO" id="GO:0000287">
    <property type="term" value="F:magnesium ion binding"/>
    <property type="evidence" value="ECO:0007669"/>
    <property type="project" value="InterPro"/>
</dbReference>
<dbReference type="GO" id="GO:0000105">
    <property type="term" value="P:L-histidine biosynthetic process"/>
    <property type="evidence" value="ECO:0000318"/>
    <property type="project" value="GO_Central"/>
</dbReference>
<dbReference type="FunFam" id="3.30.70.120:FF:000003">
    <property type="entry name" value="ATP phosphoribosyltransferase"/>
    <property type="match status" value="1"/>
</dbReference>
<dbReference type="FunFam" id="3.40.190.10:FF:000123">
    <property type="entry name" value="HIS1p ATP phosphoribosyltransferase"/>
    <property type="match status" value="1"/>
</dbReference>
<dbReference type="Gene3D" id="3.30.70.120">
    <property type="match status" value="1"/>
</dbReference>
<dbReference type="Gene3D" id="3.40.190.10">
    <property type="entry name" value="Periplasmic binding protein-like II"/>
    <property type="match status" value="2"/>
</dbReference>
<dbReference type="HAMAP" id="MF_00079">
    <property type="entry name" value="HisG_Long"/>
    <property type="match status" value="1"/>
</dbReference>
<dbReference type="InterPro" id="IPR020621">
    <property type="entry name" value="ATP-PRT_HisG_long"/>
</dbReference>
<dbReference type="InterPro" id="IPR013820">
    <property type="entry name" value="ATP_PRibTrfase_cat"/>
</dbReference>
<dbReference type="InterPro" id="IPR018198">
    <property type="entry name" value="ATP_PRibTrfase_CS"/>
</dbReference>
<dbReference type="InterPro" id="IPR001348">
    <property type="entry name" value="ATP_PRibTrfase_HisG"/>
</dbReference>
<dbReference type="InterPro" id="IPR013115">
    <property type="entry name" value="HisG_C"/>
</dbReference>
<dbReference type="InterPro" id="IPR011322">
    <property type="entry name" value="N-reg_PII-like_a/b"/>
</dbReference>
<dbReference type="InterPro" id="IPR015867">
    <property type="entry name" value="N-reg_PII/ATP_PRibTrfase_C"/>
</dbReference>
<dbReference type="NCBIfam" id="TIGR00070">
    <property type="entry name" value="hisG"/>
    <property type="match status" value="1"/>
</dbReference>
<dbReference type="NCBIfam" id="TIGR03455">
    <property type="entry name" value="HisG_C-term"/>
    <property type="match status" value="1"/>
</dbReference>
<dbReference type="PANTHER" id="PTHR21403:SF8">
    <property type="entry name" value="ATP PHOSPHORIBOSYLTRANSFERASE"/>
    <property type="match status" value="1"/>
</dbReference>
<dbReference type="PANTHER" id="PTHR21403">
    <property type="entry name" value="ATP PHOSPHORIBOSYLTRANSFERASE ATP-PRTASE"/>
    <property type="match status" value="1"/>
</dbReference>
<dbReference type="Pfam" id="PF01634">
    <property type="entry name" value="HisG"/>
    <property type="match status" value="1"/>
</dbReference>
<dbReference type="Pfam" id="PF08029">
    <property type="entry name" value="HisG_C"/>
    <property type="match status" value="1"/>
</dbReference>
<dbReference type="SUPFAM" id="SSF54913">
    <property type="entry name" value="GlnB-like"/>
    <property type="match status" value="1"/>
</dbReference>
<dbReference type="SUPFAM" id="SSF53850">
    <property type="entry name" value="Periplasmic binding protein-like II"/>
    <property type="match status" value="1"/>
</dbReference>
<dbReference type="PROSITE" id="PS01316">
    <property type="entry name" value="ATP_P_PHORIBOSYLTR"/>
    <property type="match status" value="1"/>
</dbReference>
<protein>
    <recommendedName>
        <fullName>ATP phosphoribosyltransferase</fullName>
        <shortName>ATP-PRT</shortName>
        <shortName>ATP-PRTase</shortName>
        <ecNumber>2.4.2.17</ecNumber>
    </recommendedName>
</protein>
<name>HIS1_YARLI</name>
<keyword id="KW-0028">Amino-acid biosynthesis</keyword>
<keyword id="KW-0067">ATP-binding</keyword>
<keyword id="KW-0963">Cytoplasm</keyword>
<keyword id="KW-0328">Glycosyltransferase</keyword>
<keyword id="KW-0368">Histidine biosynthesis</keyword>
<keyword id="KW-0547">Nucleotide-binding</keyword>
<keyword id="KW-1185">Reference proteome</keyword>
<keyword id="KW-0808">Transferase</keyword>
<feature type="chain" id="PRO_0000151957" description="ATP phosphoribosyltransferase">
    <location>
        <begin position="1"/>
        <end position="296"/>
    </location>
</feature>
<sequence>MDLVNNLNDRLLFAVPKKGRLYEKAVELLKGSDIQFHRHNRLDIALSTNLPLALVFLPAADIPRFVGEGRVALGITGIDQVREAKMDVENALDLNFGSCKLQVQVPEKGPYTDPKQLIGKSIVTSFTSLAEEYFAELEGVPVKDITTNIKFVGGSVEAACALGVADGIIDLVESGETMRAAGLKPIATVLETSASLIVSKNPSHPELVQMIKSRIEGVLAANKYVLCNYNAPRDKLDALLKITPGRRAATVSPLDDEGWCAVSSMAEKKKIAQIMDELKKEGASDILVFSISNCRV</sequence>
<reference key="1">
    <citation type="submission" date="1995-11" db="EMBL/GenBank/DDBJ databases">
        <authorList>
            <person name="Strick C.A."/>
            <person name="James L.C."/>
            <person name="Cole K.E."/>
            <person name="Elsenboss L.A."/>
        </authorList>
    </citation>
    <scope>NUCLEOTIDE SEQUENCE [GENOMIC DNA]</scope>
</reference>
<reference key="2">
    <citation type="journal article" date="2004" name="Nature">
        <title>Genome evolution in yeasts.</title>
        <authorList>
            <person name="Dujon B."/>
            <person name="Sherman D."/>
            <person name="Fischer G."/>
            <person name="Durrens P."/>
            <person name="Casaregola S."/>
            <person name="Lafontaine I."/>
            <person name="de Montigny J."/>
            <person name="Marck C."/>
            <person name="Neuveglise C."/>
            <person name="Talla E."/>
            <person name="Goffard N."/>
            <person name="Frangeul L."/>
            <person name="Aigle M."/>
            <person name="Anthouard V."/>
            <person name="Babour A."/>
            <person name="Barbe V."/>
            <person name="Barnay S."/>
            <person name="Blanchin S."/>
            <person name="Beckerich J.-M."/>
            <person name="Beyne E."/>
            <person name="Bleykasten C."/>
            <person name="Boisrame A."/>
            <person name="Boyer J."/>
            <person name="Cattolico L."/>
            <person name="Confanioleri F."/>
            <person name="de Daruvar A."/>
            <person name="Despons L."/>
            <person name="Fabre E."/>
            <person name="Fairhead C."/>
            <person name="Ferry-Dumazet H."/>
            <person name="Groppi A."/>
            <person name="Hantraye F."/>
            <person name="Hennequin C."/>
            <person name="Jauniaux N."/>
            <person name="Joyet P."/>
            <person name="Kachouri R."/>
            <person name="Kerrest A."/>
            <person name="Koszul R."/>
            <person name="Lemaire M."/>
            <person name="Lesur I."/>
            <person name="Ma L."/>
            <person name="Muller H."/>
            <person name="Nicaud J.-M."/>
            <person name="Nikolski M."/>
            <person name="Oztas S."/>
            <person name="Ozier-Kalogeropoulos O."/>
            <person name="Pellenz S."/>
            <person name="Potier S."/>
            <person name="Richard G.-F."/>
            <person name="Straub M.-L."/>
            <person name="Suleau A."/>
            <person name="Swennen D."/>
            <person name="Tekaia F."/>
            <person name="Wesolowski-Louvel M."/>
            <person name="Westhof E."/>
            <person name="Wirth B."/>
            <person name="Zeniou-Meyer M."/>
            <person name="Zivanovic Y."/>
            <person name="Bolotin-Fukuhara M."/>
            <person name="Thierry A."/>
            <person name="Bouchier C."/>
            <person name="Caudron B."/>
            <person name="Scarpelli C."/>
            <person name="Gaillardin C."/>
            <person name="Weissenbach J."/>
            <person name="Wincker P."/>
            <person name="Souciet J.-L."/>
        </authorList>
    </citation>
    <scope>NUCLEOTIDE SEQUENCE [LARGE SCALE GENOMIC DNA]</scope>
    <source>
        <strain>CLIB 122 / E 150</strain>
    </source>
</reference>
<proteinExistence type="inferred from homology"/>
<evidence type="ECO:0000250" key="1"/>
<evidence type="ECO:0000305" key="2"/>
<comment type="function">
    <text evidence="1">Catalyzes the condensation of ATP and 5-phosphoribose 1-diphosphate to form N'-(5'-phosphoribosyl)-ATP (PR-ATP). Has a crucial role in the pathway because the rate of histidine biosynthesis seems to be controlled primarily by regulation of the enzymatic activity (By similarity).</text>
</comment>
<comment type="catalytic activity">
    <reaction>
        <text>1-(5-phospho-beta-D-ribosyl)-ATP + diphosphate = 5-phospho-alpha-D-ribose 1-diphosphate + ATP</text>
        <dbReference type="Rhea" id="RHEA:18473"/>
        <dbReference type="ChEBI" id="CHEBI:30616"/>
        <dbReference type="ChEBI" id="CHEBI:33019"/>
        <dbReference type="ChEBI" id="CHEBI:58017"/>
        <dbReference type="ChEBI" id="CHEBI:73183"/>
        <dbReference type="EC" id="2.4.2.17"/>
    </reaction>
</comment>
<comment type="pathway">
    <text>Amino-acid biosynthesis; L-histidine biosynthesis; L-histidine from 5-phospho-alpha-D-ribose 1-diphosphate: step 1/9.</text>
</comment>
<comment type="subcellular location">
    <subcellularLocation>
        <location evidence="1">Cytoplasm</location>
    </subcellularLocation>
</comment>
<comment type="similarity">
    <text evidence="2">Belongs to the ATP phosphoribosyltransferase family.</text>
</comment>
<comment type="sequence caution" evidence="2">
    <conflict type="erroneous termination">
        <sequence resource="EMBL-CDS" id="CAG81765"/>
    </conflict>
    <text>Extended C-terminus.</text>
</comment>